<accession>Q47NU8</accession>
<organism>
    <name type="scientific">Thermobifida fusca (strain YX)</name>
    <dbReference type="NCBI Taxonomy" id="269800"/>
    <lineage>
        <taxon>Bacteria</taxon>
        <taxon>Bacillati</taxon>
        <taxon>Actinomycetota</taxon>
        <taxon>Actinomycetes</taxon>
        <taxon>Streptosporangiales</taxon>
        <taxon>Nocardiopsidaceae</taxon>
        <taxon>Thermobifida</taxon>
    </lineage>
</organism>
<reference key="1">
    <citation type="journal article" date="2007" name="J. Bacteriol.">
        <title>Genome sequence and analysis of the soil cellulolytic actinomycete Thermobifida fusca YX.</title>
        <authorList>
            <person name="Lykidis A."/>
            <person name="Mavromatis K."/>
            <person name="Ivanova N."/>
            <person name="Anderson I."/>
            <person name="Land M."/>
            <person name="DiBartolo G."/>
            <person name="Martinez M."/>
            <person name="Lapidus A."/>
            <person name="Lucas S."/>
            <person name="Copeland A."/>
            <person name="Richardson P."/>
            <person name="Wilson D.B."/>
            <person name="Kyrpides N."/>
        </authorList>
    </citation>
    <scope>NUCLEOTIDE SEQUENCE [LARGE SCALE GENOMIC DNA]</scope>
    <source>
        <strain>YX</strain>
    </source>
</reference>
<sequence length="292" mass="31440">MSIIEAIILGLVQGLTEFLPISSSGHLRIVAAFSGWPDPGAAFTAVSQIGTELAVLIYFRKDVGNILATWFRSLGNKELRRHIDARMGWYVIIGSIPIGVAGLLFEEQISAPFRDLRLTALTLIVFGVLLGMVDRYSRKHRELTDLNAQRGLIYGLFQMLALIPGVSRSGATVTGGMLMGFKREAAARYAFLLAMPAVFASGLYKLKDIGGNEYAGVGATIVGTLVAFAVGYAVIAWFMRFISTNSFMPFVYYRIALGILILALVSFGVLTPESGAEFEGSAASVTAAEATH</sequence>
<comment type="function">
    <text evidence="1">Catalyzes the dephosphorylation of undecaprenyl diphosphate (UPP). Confers resistance to bacitracin.</text>
</comment>
<comment type="catalytic activity">
    <reaction evidence="1">
        <text>di-trans,octa-cis-undecaprenyl diphosphate + H2O = di-trans,octa-cis-undecaprenyl phosphate + phosphate + H(+)</text>
        <dbReference type="Rhea" id="RHEA:28094"/>
        <dbReference type="ChEBI" id="CHEBI:15377"/>
        <dbReference type="ChEBI" id="CHEBI:15378"/>
        <dbReference type="ChEBI" id="CHEBI:43474"/>
        <dbReference type="ChEBI" id="CHEBI:58405"/>
        <dbReference type="ChEBI" id="CHEBI:60392"/>
        <dbReference type="EC" id="3.6.1.27"/>
    </reaction>
</comment>
<comment type="subcellular location">
    <subcellularLocation>
        <location evidence="1">Cell membrane</location>
        <topology evidence="1">Multi-pass membrane protein</topology>
    </subcellularLocation>
</comment>
<comment type="miscellaneous">
    <text>Bacitracin is thought to be involved in the inhibition of peptidoglycan synthesis by sequestering undecaprenyl diphosphate, thereby reducing the pool of lipid carrier available.</text>
</comment>
<comment type="similarity">
    <text evidence="1">Belongs to the UppP family.</text>
</comment>
<feature type="chain" id="PRO_0000227644" description="Undecaprenyl-diphosphatase">
    <location>
        <begin position="1"/>
        <end position="292"/>
    </location>
</feature>
<feature type="transmembrane region" description="Helical" evidence="1">
    <location>
        <begin position="87"/>
        <end position="107"/>
    </location>
</feature>
<feature type="transmembrane region" description="Helical" evidence="1">
    <location>
        <begin position="113"/>
        <end position="133"/>
    </location>
</feature>
<feature type="transmembrane region" description="Helical" evidence="1">
    <location>
        <begin position="190"/>
        <end position="210"/>
    </location>
</feature>
<feature type="transmembrane region" description="Helical" evidence="1">
    <location>
        <begin position="219"/>
        <end position="239"/>
    </location>
</feature>
<feature type="transmembrane region" description="Helical" evidence="1">
    <location>
        <begin position="250"/>
        <end position="270"/>
    </location>
</feature>
<proteinExistence type="inferred from homology"/>
<dbReference type="EC" id="3.6.1.27" evidence="1"/>
<dbReference type="EMBL" id="CP000088">
    <property type="protein sequence ID" value="AAZ55871.1"/>
    <property type="molecule type" value="Genomic_DNA"/>
</dbReference>
<dbReference type="RefSeq" id="WP_011292262.1">
    <property type="nucleotide sequence ID" value="NC_007333.1"/>
</dbReference>
<dbReference type="SMR" id="Q47NU8"/>
<dbReference type="STRING" id="269800.Tfu_1838"/>
<dbReference type="KEGG" id="tfu:Tfu_1838"/>
<dbReference type="eggNOG" id="COG1968">
    <property type="taxonomic scope" value="Bacteria"/>
</dbReference>
<dbReference type="HOGENOM" id="CLU_060296_1_0_11"/>
<dbReference type="OrthoDB" id="9808289at2"/>
<dbReference type="GO" id="GO:0005886">
    <property type="term" value="C:plasma membrane"/>
    <property type="evidence" value="ECO:0007669"/>
    <property type="project" value="UniProtKB-SubCell"/>
</dbReference>
<dbReference type="GO" id="GO:0050380">
    <property type="term" value="F:undecaprenyl-diphosphatase activity"/>
    <property type="evidence" value="ECO:0007669"/>
    <property type="project" value="UniProtKB-UniRule"/>
</dbReference>
<dbReference type="GO" id="GO:0071555">
    <property type="term" value="P:cell wall organization"/>
    <property type="evidence" value="ECO:0007669"/>
    <property type="project" value="UniProtKB-KW"/>
</dbReference>
<dbReference type="GO" id="GO:0009252">
    <property type="term" value="P:peptidoglycan biosynthetic process"/>
    <property type="evidence" value="ECO:0007669"/>
    <property type="project" value="UniProtKB-KW"/>
</dbReference>
<dbReference type="GO" id="GO:0008360">
    <property type="term" value="P:regulation of cell shape"/>
    <property type="evidence" value="ECO:0007669"/>
    <property type="project" value="UniProtKB-KW"/>
</dbReference>
<dbReference type="GO" id="GO:0046677">
    <property type="term" value="P:response to antibiotic"/>
    <property type="evidence" value="ECO:0007669"/>
    <property type="project" value="UniProtKB-UniRule"/>
</dbReference>
<dbReference type="HAMAP" id="MF_01006">
    <property type="entry name" value="Undec_diphosphatase"/>
    <property type="match status" value="1"/>
</dbReference>
<dbReference type="InterPro" id="IPR003824">
    <property type="entry name" value="UppP"/>
</dbReference>
<dbReference type="NCBIfam" id="NF001392">
    <property type="entry name" value="PRK00281.2-1"/>
    <property type="match status" value="1"/>
</dbReference>
<dbReference type="NCBIfam" id="TIGR00753">
    <property type="entry name" value="undec_PP_bacA"/>
    <property type="match status" value="1"/>
</dbReference>
<dbReference type="PANTHER" id="PTHR30622">
    <property type="entry name" value="UNDECAPRENYL-DIPHOSPHATASE"/>
    <property type="match status" value="1"/>
</dbReference>
<dbReference type="PANTHER" id="PTHR30622:SF4">
    <property type="entry name" value="UNDECAPRENYL-DIPHOSPHATASE"/>
    <property type="match status" value="1"/>
</dbReference>
<dbReference type="Pfam" id="PF02673">
    <property type="entry name" value="BacA"/>
    <property type="match status" value="1"/>
</dbReference>
<gene>
    <name evidence="1" type="primary">uppP</name>
    <name type="ordered locus">Tfu_1838</name>
</gene>
<name>UPPP_THEFY</name>
<protein>
    <recommendedName>
        <fullName evidence="1">Undecaprenyl-diphosphatase</fullName>
        <ecNumber evidence="1">3.6.1.27</ecNumber>
    </recommendedName>
    <alternativeName>
        <fullName evidence="1">Bacitracin resistance protein</fullName>
    </alternativeName>
    <alternativeName>
        <fullName evidence="1">Undecaprenyl pyrophosphate phosphatase</fullName>
    </alternativeName>
</protein>
<evidence type="ECO:0000255" key="1">
    <source>
        <dbReference type="HAMAP-Rule" id="MF_01006"/>
    </source>
</evidence>
<keyword id="KW-0046">Antibiotic resistance</keyword>
<keyword id="KW-1003">Cell membrane</keyword>
<keyword id="KW-0133">Cell shape</keyword>
<keyword id="KW-0961">Cell wall biogenesis/degradation</keyword>
<keyword id="KW-0378">Hydrolase</keyword>
<keyword id="KW-0472">Membrane</keyword>
<keyword id="KW-0573">Peptidoglycan synthesis</keyword>
<keyword id="KW-0812">Transmembrane</keyword>
<keyword id="KW-1133">Transmembrane helix</keyword>